<comment type="subcellular location">
    <subcellularLocation>
        <location evidence="1">Virion</location>
    </subcellularLocation>
</comment>
<comment type="similarity">
    <text evidence="1">Belongs to the nanoviridae capsid protein family.</text>
</comment>
<dbReference type="EMBL" id="AB009046">
    <property type="protein sequence ID" value="BAA34047.1"/>
    <property type="molecule type" value="Genomic_DNA"/>
</dbReference>
<dbReference type="RefSeq" id="NP_619767.1">
    <property type="nucleotide sequence ID" value="NC_003646.1"/>
</dbReference>
<dbReference type="SMR" id="Q9Z035"/>
<dbReference type="KEGG" id="vg:995286"/>
<dbReference type="Proteomes" id="UP001507899">
    <property type="component" value="Genome"/>
</dbReference>
<dbReference type="GO" id="GO:0039615">
    <property type="term" value="C:T=1 icosahedral viral capsid"/>
    <property type="evidence" value="ECO:0007669"/>
    <property type="project" value="UniProtKB-KW"/>
</dbReference>
<dbReference type="InterPro" id="IPR006753">
    <property type="entry name" value="Nanovirus_coat"/>
</dbReference>
<dbReference type="Pfam" id="PF04660">
    <property type="entry name" value="Nanovirus_coat"/>
    <property type="match status" value="1"/>
</dbReference>
<sequence>MVSNWNWNGMKRRRTPRRGYGRPYKPVVPITRVVVHQSALLKKDEVVGCEIKPDGDVARYKMMKVMLTCTLRMPPGELVNYIIVKSSSPIANWSAAFTTPALLVKESCQDMISIIAKGKVESNGVAGTDCTKSFNKFIRLGAGISQTQHLYVVMYTSVALKLVLEHRVYIEL</sequence>
<organismHost>
    <name type="scientific">Astragalus sinicus</name>
    <name type="common">Chinese milk vetch</name>
    <dbReference type="NCBI Taxonomy" id="47065"/>
</organismHost>
<organismHost>
    <name type="scientific">Glycine max</name>
    <name type="common">Soybean</name>
    <name type="synonym">Glycine hispida</name>
    <dbReference type="NCBI Taxonomy" id="3847"/>
</organismHost>
<organismHost>
    <name type="scientific">Phaseolus vulgaris</name>
    <name type="common">Kidney bean</name>
    <name type="synonym">French bean</name>
    <dbReference type="NCBI Taxonomy" id="3885"/>
</organismHost>
<organismHost>
    <name type="scientific">Pisum sativum</name>
    <name type="common">Garden pea</name>
    <name type="synonym">Lathyrus oleraceus</name>
    <dbReference type="NCBI Taxonomy" id="3888"/>
</organismHost>
<organismHost>
    <name type="scientific">Vicia faba</name>
    <name type="common">Broad bean</name>
    <name type="synonym">Faba vulgaris</name>
    <dbReference type="NCBI Taxonomy" id="3906"/>
</organismHost>
<proteinExistence type="inferred from homology"/>
<accession>Q9Z035</accession>
<gene>
    <name type="primary">DNA-S</name>
    <name type="synonym">C9</name>
</gene>
<reference key="1">
    <citation type="journal article" date="1998" name="J. Gen. Virol.">
        <title>Sequences of ten circular ssDNA components associated with the milk vetch dwarf virus genome.</title>
        <authorList>
            <person name="Sano Y."/>
            <person name="Wada M."/>
            <person name="Hashimoto Y."/>
            <person name="Matsumoto T."/>
            <person name="Kojima M."/>
        </authorList>
    </citation>
    <scope>NUCLEOTIDE SEQUENCE [GENOMIC DNA]</scope>
</reference>
<evidence type="ECO:0000305" key="1"/>
<feature type="chain" id="PRO_0000222435" description="Capsid protein">
    <location>
        <begin position="1"/>
        <end position="172"/>
    </location>
</feature>
<name>CAPSD_MDV1</name>
<keyword id="KW-0167">Capsid protein</keyword>
<keyword id="KW-1185">Reference proteome</keyword>
<keyword id="KW-1140">T=1 icosahedral capsid protein</keyword>
<keyword id="KW-0946">Virion</keyword>
<protein>
    <recommendedName>
        <fullName>Capsid protein</fullName>
        <shortName>CP</shortName>
    </recommendedName>
    <alternativeName>
        <fullName>Coat protein</fullName>
    </alternativeName>
</protein>
<organism>
    <name type="scientific">Milk vetch dwarf virus (isolate N)</name>
    <name type="common">MDV</name>
    <dbReference type="NCBI Taxonomy" id="291605"/>
    <lineage>
        <taxon>Viruses</taxon>
        <taxon>Monodnaviria</taxon>
        <taxon>Shotokuvirae</taxon>
        <taxon>Cressdnaviricota</taxon>
        <taxon>Arfiviricetes</taxon>
        <taxon>Mulpavirales</taxon>
        <taxon>Nanoviridae</taxon>
        <taxon>Nanovirus</taxon>
        <taxon>Milk vetch dwarf virus</taxon>
    </lineage>
</organism>